<comment type="function">
    <text evidence="1">Forms part of the ribosomal stalk which helps the ribosome interact with GTP-bound translation factors.</text>
</comment>
<comment type="subunit">
    <text evidence="1">Part of the ribosomal stalk of the 50S ribosomal subunit. Interacts with L10 and the large rRNA to form the base of the stalk. L10 forms an elongated spine to which L12 dimers bind in a sequential fashion forming a multimeric L10(L12)X complex.</text>
</comment>
<comment type="PTM">
    <text evidence="1">One or more lysine residues are methylated.</text>
</comment>
<comment type="similarity">
    <text evidence="1">Belongs to the universal ribosomal protein uL11 family.</text>
</comment>
<feature type="chain" id="PRO_1000046269" description="Large ribosomal subunit protein uL11">
    <location>
        <begin position="1"/>
        <end position="142"/>
    </location>
</feature>
<name>RL11_SHIF8</name>
<reference key="1">
    <citation type="journal article" date="2006" name="BMC Genomics">
        <title>Complete genome sequence of Shigella flexneri 5b and comparison with Shigella flexneri 2a.</title>
        <authorList>
            <person name="Nie H."/>
            <person name="Yang F."/>
            <person name="Zhang X."/>
            <person name="Yang J."/>
            <person name="Chen L."/>
            <person name="Wang J."/>
            <person name="Xiong Z."/>
            <person name="Peng J."/>
            <person name="Sun L."/>
            <person name="Dong J."/>
            <person name="Xue Y."/>
            <person name="Xu X."/>
            <person name="Chen S."/>
            <person name="Yao Z."/>
            <person name="Shen Y."/>
            <person name="Jin Q."/>
        </authorList>
    </citation>
    <scope>NUCLEOTIDE SEQUENCE [LARGE SCALE GENOMIC DNA]</scope>
    <source>
        <strain>8401</strain>
    </source>
</reference>
<protein>
    <recommendedName>
        <fullName evidence="1">Large ribosomal subunit protein uL11</fullName>
    </recommendedName>
    <alternativeName>
        <fullName evidence="2">50S ribosomal protein L11</fullName>
    </alternativeName>
</protein>
<accession>Q0SY17</accession>
<proteinExistence type="inferred from homology"/>
<keyword id="KW-0488">Methylation</keyword>
<keyword id="KW-0687">Ribonucleoprotein</keyword>
<keyword id="KW-0689">Ribosomal protein</keyword>
<keyword id="KW-0694">RNA-binding</keyword>
<keyword id="KW-0699">rRNA-binding</keyword>
<dbReference type="EMBL" id="CP000266">
    <property type="protein sequence ID" value="ABF06048.1"/>
    <property type="molecule type" value="Genomic_DNA"/>
</dbReference>
<dbReference type="RefSeq" id="WP_001085926.1">
    <property type="nucleotide sequence ID" value="NC_008258.1"/>
</dbReference>
<dbReference type="SMR" id="Q0SY17"/>
<dbReference type="GeneID" id="93777911"/>
<dbReference type="KEGG" id="sfv:SFV_4055"/>
<dbReference type="HOGENOM" id="CLU_074237_2_0_6"/>
<dbReference type="Proteomes" id="UP000000659">
    <property type="component" value="Chromosome"/>
</dbReference>
<dbReference type="GO" id="GO:0022625">
    <property type="term" value="C:cytosolic large ribosomal subunit"/>
    <property type="evidence" value="ECO:0007669"/>
    <property type="project" value="TreeGrafter"/>
</dbReference>
<dbReference type="GO" id="GO:0070180">
    <property type="term" value="F:large ribosomal subunit rRNA binding"/>
    <property type="evidence" value="ECO:0007669"/>
    <property type="project" value="UniProtKB-UniRule"/>
</dbReference>
<dbReference type="GO" id="GO:0003735">
    <property type="term" value="F:structural constituent of ribosome"/>
    <property type="evidence" value="ECO:0007669"/>
    <property type="project" value="InterPro"/>
</dbReference>
<dbReference type="GO" id="GO:0006412">
    <property type="term" value="P:translation"/>
    <property type="evidence" value="ECO:0007669"/>
    <property type="project" value="UniProtKB-UniRule"/>
</dbReference>
<dbReference type="CDD" id="cd00349">
    <property type="entry name" value="Ribosomal_L11"/>
    <property type="match status" value="1"/>
</dbReference>
<dbReference type="FunFam" id="1.10.10.250:FF:000001">
    <property type="entry name" value="50S ribosomal protein L11"/>
    <property type="match status" value="1"/>
</dbReference>
<dbReference type="FunFam" id="3.30.1550.10:FF:000001">
    <property type="entry name" value="50S ribosomal protein L11"/>
    <property type="match status" value="1"/>
</dbReference>
<dbReference type="Gene3D" id="1.10.10.250">
    <property type="entry name" value="Ribosomal protein L11, C-terminal domain"/>
    <property type="match status" value="1"/>
</dbReference>
<dbReference type="Gene3D" id="3.30.1550.10">
    <property type="entry name" value="Ribosomal protein L11/L12, N-terminal domain"/>
    <property type="match status" value="1"/>
</dbReference>
<dbReference type="HAMAP" id="MF_00736">
    <property type="entry name" value="Ribosomal_uL11"/>
    <property type="match status" value="1"/>
</dbReference>
<dbReference type="InterPro" id="IPR000911">
    <property type="entry name" value="Ribosomal_uL11"/>
</dbReference>
<dbReference type="InterPro" id="IPR006519">
    <property type="entry name" value="Ribosomal_uL11_bac-typ"/>
</dbReference>
<dbReference type="InterPro" id="IPR020783">
    <property type="entry name" value="Ribosomal_uL11_C"/>
</dbReference>
<dbReference type="InterPro" id="IPR036769">
    <property type="entry name" value="Ribosomal_uL11_C_sf"/>
</dbReference>
<dbReference type="InterPro" id="IPR020785">
    <property type="entry name" value="Ribosomal_uL11_CS"/>
</dbReference>
<dbReference type="InterPro" id="IPR020784">
    <property type="entry name" value="Ribosomal_uL11_N"/>
</dbReference>
<dbReference type="InterPro" id="IPR036796">
    <property type="entry name" value="Ribosomal_uL11_N_sf"/>
</dbReference>
<dbReference type="NCBIfam" id="TIGR01632">
    <property type="entry name" value="L11_bact"/>
    <property type="match status" value="1"/>
</dbReference>
<dbReference type="PANTHER" id="PTHR11661">
    <property type="entry name" value="60S RIBOSOMAL PROTEIN L12"/>
    <property type="match status" value="1"/>
</dbReference>
<dbReference type="PANTHER" id="PTHR11661:SF1">
    <property type="entry name" value="LARGE RIBOSOMAL SUBUNIT PROTEIN UL11M"/>
    <property type="match status" value="1"/>
</dbReference>
<dbReference type="Pfam" id="PF00298">
    <property type="entry name" value="Ribosomal_L11"/>
    <property type="match status" value="1"/>
</dbReference>
<dbReference type="Pfam" id="PF03946">
    <property type="entry name" value="Ribosomal_L11_N"/>
    <property type="match status" value="1"/>
</dbReference>
<dbReference type="SMART" id="SM00649">
    <property type="entry name" value="RL11"/>
    <property type="match status" value="1"/>
</dbReference>
<dbReference type="SUPFAM" id="SSF54747">
    <property type="entry name" value="Ribosomal L11/L12e N-terminal domain"/>
    <property type="match status" value="1"/>
</dbReference>
<dbReference type="SUPFAM" id="SSF46906">
    <property type="entry name" value="Ribosomal protein L11, C-terminal domain"/>
    <property type="match status" value="1"/>
</dbReference>
<dbReference type="PROSITE" id="PS00359">
    <property type="entry name" value="RIBOSOMAL_L11"/>
    <property type="match status" value="1"/>
</dbReference>
<evidence type="ECO:0000255" key="1">
    <source>
        <dbReference type="HAMAP-Rule" id="MF_00736"/>
    </source>
</evidence>
<evidence type="ECO:0000305" key="2"/>
<organism>
    <name type="scientific">Shigella flexneri serotype 5b (strain 8401)</name>
    <dbReference type="NCBI Taxonomy" id="373384"/>
    <lineage>
        <taxon>Bacteria</taxon>
        <taxon>Pseudomonadati</taxon>
        <taxon>Pseudomonadota</taxon>
        <taxon>Gammaproteobacteria</taxon>
        <taxon>Enterobacterales</taxon>
        <taxon>Enterobacteriaceae</taxon>
        <taxon>Shigella</taxon>
    </lineage>
</organism>
<sequence length="142" mass="14875">MAKKVQAYVKLQVAAGMANPSPPVGPALGQQGVNIMEFCKAFNAKTDSIEKGLPIPVVITVYADRSFTFVTKTPPAAVLLKKAAGIKSGSGKPNKDKVGKISRAQLQEIAQTKAADMTGADIEAMTRSIEGTARSMGLVVED</sequence>
<gene>
    <name evidence="1" type="primary">rplK</name>
    <name type="ordered locus">SFV_4055</name>
</gene>